<comment type="function">
    <text evidence="1">Catalyzes the reversible reaction in which hydroxymethyl group from 5,10-methylenetetrahydrofolate is transferred onto alpha-ketoisovalerate to form ketopantoate.</text>
</comment>
<comment type="catalytic activity">
    <reaction evidence="1">
        <text>3-methyl-2-oxobutanoate + (6R)-5,10-methylene-5,6,7,8-tetrahydrofolate + H2O = 2-dehydropantoate + (6S)-5,6,7,8-tetrahydrofolate</text>
        <dbReference type="Rhea" id="RHEA:11824"/>
        <dbReference type="ChEBI" id="CHEBI:11561"/>
        <dbReference type="ChEBI" id="CHEBI:11851"/>
        <dbReference type="ChEBI" id="CHEBI:15377"/>
        <dbReference type="ChEBI" id="CHEBI:15636"/>
        <dbReference type="ChEBI" id="CHEBI:57453"/>
        <dbReference type="EC" id="2.1.2.11"/>
    </reaction>
</comment>
<comment type="cofactor">
    <cofactor evidence="1">
        <name>Mg(2+)</name>
        <dbReference type="ChEBI" id="CHEBI:18420"/>
    </cofactor>
    <text evidence="1">Binds 1 Mg(2+) ion per subunit.</text>
</comment>
<comment type="pathway">
    <text evidence="1">Cofactor biosynthesis; (R)-pantothenate biosynthesis; (R)-pantoate from 3-methyl-2-oxobutanoate: step 1/2.</text>
</comment>
<comment type="subunit">
    <text evidence="1">Homodecamer; pentamer of dimers.</text>
</comment>
<comment type="subcellular location">
    <subcellularLocation>
        <location evidence="1">Cytoplasm</location>
    </subcellularLocation>
</comment>
<comment type="similarity">
    <text evidence="1">Belongs to the PanB family.</text>
</comment>
<accession>B1LTL1</accession>
<protein>
    <recommendedName>
        <fullName evidence="1">3-methyl-2-oxobutanoate hydroxymethyltransferase</fullName>
        <ecNumber evidence="1">2.1.2.11</ecNumber>
    </recommendedName>
    <alternativeName>
        <fullName evidence="1">Ketopantoate hydroxymethyltransferase</fullName>
        <shortName evidence="1">KPHMT</shortName>
    </alternativeName>
</protein>
<evidence type="ECO:0000255" key="1">
    <source>
        <dbReference type="HAMAP-Rule" id="MF_00156"/>
    </source>
</evidence>
<keyword id="KW-0963">Cytoplasm</keyword>
<keyword id="KW-0460">Magnesium</keyword>
<keyword id="KW-0479">Metal-binding</keyword>
<keyword id="KW-0566">Pantothenate biosynthesis</keyword>
<keyword id="KW-0808">Transferase</keyword>
<sequence length="272" mass="29119">MSQVVQSRRLRAIDIGKRKAEGRKIIALTAYHAHTAGIVDPYCDFILVGDSLGMVMHGMESTIPVTLEMMILQAQAVIRGTEKALVVVDMPFGSYEASREQAFLNASRVLKETGAGAIKMEGGAHFAETVAFLVQRGVPVMGHIGLTPQAVNTMGGFKVQGRGPDDERRLLEDARAISEAGAFAIVLEGIVEPVARAIASSPRVTAATIGIGASAVCDGQILVLEDMLGLSERTPKFVRQFGSLRTHIEDAVKAYADEVRAGRFPADDHTYG</sequence>
<dbReference type="EC" id="2.1.2.11" evidence="1"/>
<dbReference type="EMBL" id="CP001001">
    <property type="protein sequence ID" value="ACB23957.1"/>
    <property type="molecule type" value="Genomic_DNA"/>
</dbReference>
<dbReference type="RefSeq" id="WP_012318941.1">
    <property type="nucleotide sequence ID" value="NC_010505.1"/>
</dbReference>
<dbReference type="SMR" id="B1LTL1"/>
<dbReference type="STRING" id="426355.Mrad2831_1962"/>
<dbReference type="GeneID" id="6137991"/>
<dbReference type="KEGG" id="mrd:Mrad2831_1962"/>
<dbReference type="eggNOG" id="COG0413">
    <property type="taxonomic scope" value="Bacteria"/>
</dbReference>
<dbReference type="HOGENOM" id="CLU_036645_1_0_5"/>
<dbReference type="OrthoDB" id="9781789at2"/>
<dbReference type="UniPathway" id="UPA00028">
    <property type="reaction ID" value="UER00003"/>
</dbReference>
<dbReference type="Proteomes" id="UP000006589">
    <property type="component" value="Chromosome"/>
</dbReference>
<dbReference type="GO" id="GO:0005737">
    <property type="term" value="C:cytoplasm"/>
    <property type="evidence" value="ECO:0007669"/>
    <property type="project" value="UniProtKB-SubCell"/>
</dbReference>
<dbReference type="GO" id="GO:0003864">
    <property type="term" value="F:3-methyl-2-oxobutanoate hydroxymethyltransferase activity"/>
    <property type="evidence" value="ECO:0007669"/>
    <property type="project" value="UniProtKB-UniRule"/>
</dbReference>
<dbReference type="GO" id="GO:0000287">
    <property type="term" value="F:magnesium ion binding"/>
    <property type="evidence" value="ECO:0007669"/>
    <property type="project" value="TreeGrafter"/>
</dbReference>
<dbReference type="GO" id="GO:0015940">
    <property type="term" value="P:pantothenate biosynthetic process"/>
    <property type="evidence" value="ECO:0007669"/>
    <property type="project" value="UniProtKB-UniRule"/>
</dbReference>
<dbReference type="CDD" id="cd06557">
    <property type="entry name" value="KPHMT-like"/>
    <property type="match status" value="1"/>
</dbReference>
<dbReference type="FunFam" id="3.20.20.60:FF:000003">
    <property type="entry name" value="3-methyl-2-oxobutanoate hydroxymethyltransferase"/>
    <property type="match status" value="1"/>
</dbReference>
<dbReference type="Gene3D" id="3.20.20.60">
    <property type="entry name" value="Phosphoenolpyruvate-binding domains"/>
    <property type="match status" value="1"/>
</dbReference>
<dbReference type="HAMAP" id="MF_00156">
    <property type="entry name" value="PanB"/>
    <property type="match status" value="1"/>
</dbReference>
<dbReference type="InterPro" id="IPR003700">
    <property type="entry name" value="Pantoate_hydroxy_MeTrfase"/>
</dbReference>
<dbReference type="InterPro" id="IPR015813">
    <property type="entry name" value="Pyrv/PenolPyrv_kinase-like_dom"/>
</dbReference>
<dbReference type="InterPro" id="IPR040442">
    <property type="entry name" value="Pyrv_kinase-like_dom_sf"/>
</dbReference>
<dbReference type="NCBIfam" id="TIGR00222">
    <property type="entry name" value="panB"/>
    <property type="match status" value="1"/>
</dbReference>
<dbReference type="NCBIfam" id="NF001452">
    <property type="entry name" value="PRK00311.1"/>
    <property type="match status" value="1"/>
</dbReference>
<dbReference type="PANTHER" id="PTHR20881">
    <property type="entry name" value="3-METHYL-2-OXOBUTANOATE HYDROXYMETHYLTRANSFERASE"/>
    <property type="match status" value="1"/>
</dbReference>
<dbReference type="PANTHER" id="PTHR20881:SF0">
    <property type="entry name" value="3-METHYL-2-OXOBUTANOATE HYDROXYMETHYLTRANSFERASE"/>
    <property type="match status" value="1"/>
</dbReference>
<dbReference type="Pfam" id="PF02548">
    <property type="entry name" value="Pantoate_transf"/>
    <property type="match status" value="1"/>
</dbReference>
<dbReference type="PIRSF" id="PIRSF000388">
    <property type="entry name" value="Pantoate_hydroxy_MeTrfase"/>
    <property type="match status" value="1"/>
</dbReference>
<dbReference type="SUPFAM" id="SSF51621">
    <property type="entry name" value="Phosphoenolpyruvate/pyruvate domain"/>
    <property type="match status" value="1"/>
</dbReference>
<gene>
    <name evidence="1" type="primary">panB</name>
    <name type="ordered locus">Mrad2831_1962</name>
</gene>
<organism>
    <name type="scientific">Methylobacterium radiotolerans (strain ATCC 27329 / DSM 1819 / JCM 2831 / NBRC 15690 / NCIMB 10815 / 0-1)</name>
    <dbReference type="NCBI Taxonomy" id="426355"/>
    <lineage>
        <taxon>Bacteria</taxon>
        <taxon>Pseudomonadati</taxon>
        <taxon>Pseudomonadota</taxon>
        <taxon>Alphaproteobacteria</taxon>
        <taxon>Hyphomicrobiales</taxon>
        <taxon>Methylobacteriaceae</taxon>
        <taxon>Methylobacterium</taxon>
    </lineage>
</organism>
<name>PANB_METRJ</name>
<proteinExistence type="inferred from homology"/>
<reference key="1">
    <citation type="submission" date="2008-03" db="EMBL/GenBank/DDBJ databases">
        <title>Complete sequence of chromosome of Methylobacterium radiotolerans JCM 2831.</title>
        <authorList>
            <consortium name="US DOE Joint Genome Institute"/>
            <person name="Copeland A."/>
            <person name="Lucas S."/>
            <person name="Lapidus A."/>
            <person name="Glavina del Rio T."/>
            <person name="Dalin E."/>
            <person name="Tice H."/>
            <person name="Bruce D."/>
            <person name="Goodwin L."/>
            <person name="Pitluck S."/>
            <person name="Kiss H."/>
            <person name="Brettin T."/>
            <person name="Detter J.C."/>
            <person name="Han C."/>
            <person name="Kuske C.R."/>
            <person name="Schmutz J."/>
            <person name="Larimer F."/>
            <person name="Land M."/>
            <person name="Hauser L."/>
            <person name="Kyrpides N."/>
            <person name="Mikhailova N."/>
            <person name="Marx C.J."/>
            <person name="Richardson P."/>
        </authorList>
    </citation>
    <scope>NUCLEOTIDE SEQUENCE [LARGE SCALE GENOMIC DNA]</scope>
    <source>
        <strain>ATCC 27329 / DSM 1819 / JCM 2831 / NBRC 15690 / NCIMB 10815 / 0-1</strain>
    </source>
</reference>
<feature type="chain" id="PRO_1000096985" description="3-methyl-2-oxobutanoate hydroxymethyltransferase">
    <location>
        <begin position="1"/>
        <end position="272"/>
    </location>
</feature>
<feature type="active site" description="Proton acceptor" evidence="1">
    <location>
        <position position="188"/>
    </location>
</feature>
<feature type="binding site" evidence="1">
    <location>
        <begin position="50"/>
        <end position="51"/>
    </location>
    <ligand>
        <name>3-methyl-2-oxobutanoate</name>
        <dbReference type="ChEBI" id="CHEBI:11851"/>
    </ligand>
</feature>
<feature type="binding site" evidence="1">
    <location>
        <position position="50"/>
    </location>
    <ligand>
        <name>Mg(2+)</name>
        <dbReference type="ChEBI" id="CHEBI:18420"/>
    </ligand>
</feature>
<feature type="binding site" evidence="1">
    <location>
        <position position="89"/>
    </location>
    <ligand>
        <name>3-methyl-2-oxobutanoate</name>
        <dbReference type="ChEBI" id="CHEBI:11851"/>
    </ligand>
</feature>
<feature type="binding site" evidence="1">
    <location>
        <position position="89"/>
    </location>
    <ligand>
        <name>Mg(2+)</name>
        <dbReference type="ChEBI" id="CHEBI:18420"/>
    </ligand>
</feature>
<feature type="binding site" evidence="1">
    <location>
        <position position="119"/>
    </location>
    <ligand>
        <name>3-methyl-2-oxobutanoate</name>
        <dbReference type="ChEBI" id="CHEBI:11851"/>
    </ligand>
</feature>
<feature type="binding site" evidence="1">
    <location>
        <position position="121"/>
    </location>
    <ligand>
        <name>Mg(2+)</name>
        <dbReference type="ChEBI" id="CHEBI:18420"/>
    </ligand>
</feature>